<accession>Q46L78</accession>
<gene>
    <name evidence="1" type="primary">trpD</name>
    <name type="ordered locus">PMN2A_0258</name>
</gene>
<reference key="1">
    <citation type="journal article" date="2007" name="PLoS Genet.">
        <title>Patterns and implications of gene gain and loss in the evolution of Prochlorococcus.</title>
        <authorList>
            <person name="Kettler G.C."/>
            <person name="Martiny A.C."/>
            <person name="Huang K."/>
            <person name="Zucker J."/>
            <person name="Coleman M.L."/>
            <person name="Rodrigue S."/>
            <person name="Chen F."/>
            <person name="Lapidus A."/>
            <person name="Ferriera S."/>
            <person name="Johnson J."/>
            <person name="Steglich C."/>
            <person name="Church G.M."/>
            <person name="Richardson P."/>
            <person name="Chisholm S.W."/>
        </authorList>
    </citation>
    <scope>NUCLEOTIDE SEQUENCE [LARGE SCALE GENOMIC DNA]</scope>
    <source>
        <strain>NATL2A</strain>
    </source>
</reference>
<name>TRPD_PROMT</name>
<organism>
    <name type="scientific">Prochlorococcus marinus (strain NATL2A)</name>
    <dbReference type="NCBI Taxonomy" id="59920"/>
    <lineage>
        <taxon>Bacteria</taxon>
        <taxon>Bacillati</taxon>
        <taxon>Cyanobacteriota</taxon>
        <taxon>Cyanophyceae</taxon>
        <taxon>Synechococcales</taxon>
        <taxon>Prochlorococcaceae</taxon>
        <taxon>Prochlorococcus</taxon>
    </lineage>
</organism>
<proteinExistence type="inferred from homology"/>
<keyword id="KW-0028">Amino-acid biosynthesis</keyword>
<keyword id="KW-0057">Aromatic amino acid biosynthesis</keyword>
<keyword id="KW-0328">Glycosyltransferase</keyword>
<keyword id="KW-0460">Magnesium</keyword>
<keyword id="KW-0479">Metal-binding</keyword>
<keyword id="KW-1185">Reference proteome</keyword>
<keyword id="KW-0808">Transferase</keyword>
<keyword id="KW-0822">Tryptophan biosynthesis</keyword>
<feature type="chain" id="PRO_0000227180" description="Anthranilate phosphoribosyltransferase">
    <location>
        <begin position="1"/>
        <end position="345"/>
    </location>
</feature>
<feature type="binding site" evidence="1">
    <location>
        <position position="88"/>
    </location>
    <ligand>
        <name>5-phospho-alpha-D-ribose 1-diphosphate</name>
        <dbReference type="ChEBI" id="CHEBI:58017"/>
    </ligand>
</feature>
<feature type="binding site" evidence="1">
    <location>
        <position position="88"/>
    </location>
    <ligand>
        <name>anthranilate</name>
        <dbReference type="ChEBI" id="CHEBI:16567"/>
        <label>1</label>
    </ligand>
</feature>
<feature type="binding site" evidence="1">
    <location>
        <begin position="91"/>
        <end position="92"/>
    </location>
    <ligand>
        <name>5-phospho-alpha-D-ribose 1-diphosphate</name>
        <dbReference type="ChEBI" id="CHEBI:58017"/>
    </ligand>
</feature>
<feature type="binding site" evidence="1">
    <location>
        <position position="96"/>
    </location>
    <ligand>
        <name>5-phospho-alpha-D-ribose 1-diphosphate</name>
        <dbReference type="ChEBI" id="CHEBI:58017"/>
    </ligand>
</feature>
<feature type="binding site" evidence="1">
    <location>
        <begin position="98"/>
        <end position="101"/>
    </location>
    <ligand>
        <name>5-phospho-alpha-D-ribose 1-diphosphate</name>
        <dbReference type="ChEBI" id="CHEBI:58017"/>
    </ligand>
</feature>
<feature type="binding site" evidence="1">
    <location>
        <position position="100"/>
    </location>
    <ligand>
        <name>Mg(2+)</name>
        <dbReference type="ChEBI" id="CHEBI:18420"/>
        <label>1</label>
    </ligand>
</feature>
<feature type="binding site" evidence="1">
    <location>
        <begin position="116"/>
        <end position="124"/>
    </location>
    <ligand>
        <name>5-phospho-alpha-D-ribose 1-diphosphate</name>
        <dbReference type="ChEBI" id="CHEBI:58017"/>
    </ligand>
</feature>
<feature type="binding site" evidence="1">
    <location>
        <position position="119"/>
    </location>
    <ligand>
        <name>anthranilate</name>
        <dbReference type="ChEBI" id="CHEBI:16567"/>
        <label>1</label>
    </ligand>
</feature>
<feature type="binding site" evidence="1">
    <location>
        <position position="128"/>
    </location>
    <ligand>
        <name>5-phospho-alpha-D-ribose 1-diphosphate</name>
        <dbReference type="ChEBI" id="CHEBI:58017"/>
    </ligand>
</feature>
<feature type="binding site" evidence="1">
    <location>
        <position position="174"/>
    </location>
    <ligand>
        <name>anthranilate</name>
        <dbReference type="ChEBI" id="CHEBI:16567"/>
        <label>2</label>
    </ligand>
</feature>
<feature type="binding site" evidence="1">
    <location>
        <position position="233"/>
    </location>
    <ligand>
        <name>Mg(2+)</name>
        <dbReference type="ChEBI" id="CHEBI:18420"/>
        <label>2</label>
    </ligand>
</feature>
<feature type="binding site" evidence="1">
    <location>
        <position position="234"/>
    </location>
    <ligand>
        <name>Mg(2+)</name>
        <dbReference type="ChEBI" id="CHEBI:18420"/>
        <label>1</label>
    </ligand>
</feature>
<feature type="binding site" evidence="1">
    <location>
        <position position="234"/>
    </location>
    <ligand>
        <name>Mg(2+)</name>
        <dbReference type="ChEBI" id="CHEBI:18420"/>
        <label>2</label>
    </ligand>
</feature>
<comment type="function">
    <text evidence="1">Catalyzes the transfer of the phosphoribosyl group of 5-phosphorylribose-1-pyrophosphate (PRPP) to anthranilate to yield N-(5'-phosphoribosyl)-anthranilate (PRA).</text>
</comment>
<comment type="catalytic activity">
    <reaction evidence="1">
        <text>N-(5-phospho-beta-D-ribosyl)anthranilate + diphosphate = 5-phospho-alpha-D-ribose 1-diphosphate + anthranilate</text>
        <dbReference type="Rhea" id="RHEA:11768"/>
        <dbReference type="ChEBI" id="CHEBI:16567"/>
        <dbReference type="ChEBI" id="CHEBI:18277"/>
        <dbReference type="ChEBI" id="CHEBI:33019"/>
        <dbReference type="ChEBI" id="CHEBI:58017"/>
        <dbReference type="EC" id="2.4.2.18"/>
    </reaction>
</comment>
<comment type="cofactor">
    <cofactor evidence="1">
        <name>Mg(2+)</name>
        <dbReference type="ChEBI" id="CHEBI:18420"/>
    </cofactor>
    <text evidence="1">Binds 2 magnesium ions per monomer.</text>
</comment>
<comment type="pathway">
    <text evidence="1">Amino-acid biosynthesis; L-tryptophan biosynthesis; L-tryptophan from chorismate: step 2/5.</text>
</comment>
<comment type="subunit">
    <text evidence="1">Homodimer.</text>
</comment>
<comment type="similarity">
    <text evidence="1">Belongs to the anthranilate phosphoribosyltransferase family.</text>
</comment>
<protein>
    <recommendedName>
        <fullName evidence="1">Anthranilate phosphoribosyltransferase</fullName>
        <ecNumber evidence="1">2.4.2.18</ecNumber>
    </recommendedName>
</protein>
<evidence type="ECO:0000255" key="1">
    <source>
        <dbReference type="HAMAP-Rule" id="MF_00211"/>
    </source>
</evidence>
<dbReference type="EC" id="2.4.2.18" evidence="1"/>
<dbReference type="EMBL" id="CP000095">
    <property type="protein sequence ID" value="AAZ57750.1"/>
    <property type="molecule type" value="Genomic_DNA"/>
</dbReference>
<dbReference type="RefSeq" id="WP_011293792.1">
    <property type="nucleotide sequence ID" value="NC_007335.2"/>
</dbReference>
<dbReference type="SMR" id="Q46L78"/>
<dbReference type="STRING" id="59920.PMN2A_0258"/>
<dbReference type="KEGG" id="pmn:PMN2A_0258"/>
<dbReference type="HOGENOM" id="CLU_034315_2_1_3"/>
<dbReference type="OrthoDB" id="9806430at2"/>
<dbReference type="PhylomeDB" id="Q46L78"/>
<dbReference type="UniPathway" id="UPA00035">
    <property type="reaction ID" value="UER00041"/>
</dbReference>
<dbReference type="Proteomes" id="UP000002535">
    <property type="component" value="Chromosome"/>
</dbReference>
<dbReference type="GO" id="GO:0005829">
    <property type="term" value="C:cytosol"/>
    <property type="evidence" value="ECO:0007669"/>
    <property type="project" value="TreeGrafter"/>
</dbReference>
<dbReference type="GO" id="GO:0004048">
    <property type="term" value="F:anthranilate phosphoribosyltransferase activity"/>
    <property type="evidence" value="ECO:0007669"/>
    <property type="project" value="UniProtKB-UniRule"/>
</dbReference>
<dbReference type="GO" id="GO:0000287">
    <property type="term" value="F:magnesium ion binding"/>
    <property type="evidence" value="ECO:0007669"/>
    <property type="project" value="UniProtKB-UniRule"/>
</dbReference>
<dbReference type="GO" id="GO:0000162">
    <property type="term" value="P:L-tryptophan biosynthetic process"/>
    <property type="evidence" value="ECO:0007669"/>
    <property type="project" value="UniProtKB-UniRule"/>
</dbReference>
<dbReference type="FunFam" id="3.40.1030.10:FF:000002">
    <property type="entry name" value="Anthranilate phosphoribosyltransferase"/>
    <property type="match status" value="1"/>
</dbReference>
<dbReference type="Gene3D" id="3.40.1030.10">
    <property type="entry name" value="Nucleoside phosphorylase/phosphoribosyltransferase catalytic domain"/>
    <property type="match status" value="1"/>
</dbReference>
<dbReference type="Gene3D" id="1.20.970.10">
    <property type="entry name" value="Transferase, Pyrimidine Nucleoside Phosphorylase, Chain C"/>
    <property type="match status" value="1"/>
</dbReference>
<dbReference type="HAMAP" id="MF_00211">
    <property type="entry name" value="TrpD"/>
    <property type="match status" value="1"/>
</dbReference>
<dbReference type="InterPro" id="IPR005940">
    <property type="entry name" value="Anthranilate_Pribosyl_Tfrase"/>
</dbReference>
<dbReference type="InterPro" id="IPR000312">
    <property type="entry name" value="Glycosyl_Trfase_fam3"/>
</dbReference>
<dbReference type="InterPro" id="IPR017459">
    <property type="entry name" value="Glycosyl_Trfase_fam3_N_dom"/>
</dbReference>
<dbReference type="InterPro" id="IPR036320">
    <property type="entry name" value="Glycosyl_Trfase_fam3_N_dom_sf"/>
</dbReference>
<dbReference type="InterPro" id="IPR035902">
    <property type="entry name" value="Nuc_phospho_transferase"/>
</dbReference>
<dbReference type="NCBIfam" id="TIGR01245">
    <property type="entry name" value="trpD"/>
    <property type="match status" value="1"/>
</dbReference>
<dbReference type="PANTHER" id="PTHR43285">
    <property type="entry name" value="ANTHRANILATE PHOSPHORIBOSYLTRANSFERASE"/>
    <property type="match status" value="1"/>
</dbReference>
<dbReference type="PANTHER" id="PTHR43285:SF2">
    <property type="entry name" value="ANTHRANILATE PHOSPHORIBOSYLTRANSFERASE"/>
    <property type="match status" value="1"/>
</dbReference>
<dbReference type="Pfam" id="PF02885">
    <property type="entry name" value="Glycos_trans_3N"/>
    <property type="match status" value="1"/>
</dbReference>
<dbReference type="Pfam" id="PF00591">
    <property type="entry name" value="Glycos_transf_3"/>
    <property type="match status" value="1"/>
</dbReference>
<dbReference type="SUPFAM" id="SSF52418">
    <property type="entry name" value="Nucleoside phosphorylase/phosphoribosyltransferase catalytic domain"/>
    <property type="match status" value="1"/>
</dbReference>
<dbReference type="SUPFAM" id="SSF47648">
    <property type="entry name" value="Nucleoside phosphorylase/phosphoribosyltransferase N-terminal domain"/>
    <property type="match status" value="1"/>
</dbReference>
<sequence>MTILNPITFPVILESLLASNDLTEEQSNYLMNSWLDNKIEPVQTGAFLAAFRAKGVSGDELSAMAKILQDASTTPSDLPSFDLVDTCGTGGDGANTFNISTGVAFVSAALGVKIAKHGNRSASGKVGSADVLENLGLPLNVSSGKVVEALKKLGITFLFAPSWHPSLVNLAPLRKSLGVRTIFNLLGPLVNPLRPKSQVLGVAKADLLDPMSVALKGMGLKRAVVVHGAGGLDEASLAGANQFRFLDKDVIRSEIISPGDLGLTQISNESLKGDGLKTNSHILKSLLNGEGNQYHKEVIALNTALVLWVSGTEDDLSSGVKRALDCLDTDKSWLLFEQLRDFLAT</sequence>